<sequence>MALSFSLLMAVLVLSYKSICSLGCDLPQTHSLGNRRALILLGQMGRISPFSCLKDRHDFRIPQEEFDGNQFQKAQAISVLHEMIQQTFNLFSTEDSSAAWEQSLLEKFSTELYQQLNDLEACVIQEVGVEETPLMNEDSILAVRKYFQRITLYLIERKYSPCAWEVVRAEIMRSLSFSTNLQKRLRRKD</sequence>
<evidence type="ECO:0000250" key="1"/>
<evidence type="ECO:0000269" key="2">
    <source>
    </source>
</evidence>
<evidence type="ECO:0000305" key="3"/>
<comment type="function">
    <text>Produced by macrophages, IFN-alpha have antiviral activities. Interferon stimulates the production of two enzymes: a protein kinase and an oligoadenylate synthetase.</text>
</comment>
<comment type="subcellular location">
    <subcellularLocation>
        <location>Secreted</location>
    </subcellularLocation>
</comment>
<comment type="similarity">
    <text evidence="3">Belongs to the alpha/beta interferon family.</text>
</comment>
<reference key="1">
    <citation type="journal article" date="1981" name="Nature">
        <title>The structure of eight distinct cloned human leukocyte interferon cDNAs.</title>
        <authorList>
            <person name="Goeddel D.V."/>
            <person name="Leung D.W."/>
            <person name="Dull T.J."/>
            <person name="Gross M."/>
            <person name="Lawn R.M."/>
            <person name="McCandliss R."/>
            <person name="Seeburg P.H."/>
            <person name="Ullrich A."/>
            <person name="Yelverton E."/>
            <person name="Gray P.W."/>
        </authorList>
    </citation>
    <scope>NUCLEOTIDE SEQUENCE [MRNA]</scope>
</reference>
<reference key="2">
    <citation type="journal article" date="2004" name="Nature">
        <title>DNA sequence and analysis of human chromosome 9.</title>
        <authorList>
            <person name="Humphray S.J."/>
            <person name="Oliver K."/>
            <person name="Hunt A.R."/>
            <person name="Plumb R.W."/>
            <person name="Loveland J.E."/>
            <person name="Howe K.L."/>
            <person name="Andrews T.D."/>
            <person name="Searle S."/>
            <person name="Hunt S.E."/>
            <person name="Scott C.E."/>
            <person name="Jones M.C."/>
            <person name="Ainscough R."/>
            <person name="Almeida J.P."/>
            <person name="Ambrose K.D."/>
            <person name="Ashwell R.I.S."/>
            <person name="Babbage A.K."/>
            <person name="Babbage S."/>
            <person name="Bagguley C.L."/>
            <person name="Bailey J."/>
            <person name="Banerjee R."/>
            <person name="Barker D.J."/>
            <person name="Barlow K.F."/>
            <person name="Bates K."/>
            <person name="Beasley H."/>
            <person name="Beasley O."/>
            <person name="Bird C.P."/>
            <person name="Bray-Allen S."/>
            <person name="Brown A.J."/>
            <person name="Brown J.Y."/>
            <person name="Burford D."/>
            <person name="Burrill W."/>
            <person name="Burton J."/>
            <person name="Carder C."/>
            <person name="Carter N.P."/>
            <person name="Chapman J.C."/>
            <person name="Chen Y."/>
            <person name="Clarke G."/>
            <person name="Clark S.Y."/>
            <person name="Clee C.M."/>
            <person name="Clegg S."/>
            <person name="Collier R.E."/>
            <person name="Corby N."/>
            <person name="Crosier M."/>
            <person name="Cummings A.T."/>
            <person name="Davies J."/>
            <person name="Dhami P."/>
            <person name="Dunn M."/>
            <person name="Dutta I."/>
            <person name="Dyer L.W."/>
            <person name="Earthrowl M.E."/>
            <person name="Faulkner L."/>
            <person name="Fleming C.J."/>
            <person name="Frankish A."/>
            <person name="Frankland J.A."/>
            <person name="French L."/>
            <person name="Fricker D.G."/>
            <person name="Garner P."/>
            <person name="Garnett J."/>
            <person name="Ghori J."/>
            <person name="Gilbert J.G.R."/>
            <person name="Glison C."/>
            <person name="Grafham D.V."/>
            <person name="Gribble S."/>
            <person name="Griffiths C."/>
            <person name="Griffiths-Jones S."/>
            <person name="Grocock R."/>
            <person name="Guy J."/>
            <person name="Hall R.E."/>
            <person name="Hammond S."/>
            <person name="Harley J.L."/>
            <person name="Harrison E.S.I."/>
            <person name="Hart E.A."/>
            <person name="Heath P.D."/>
            <person name="Henderson C.D."/>
            <person name="Hopkins B.L."/>
            <person name="Howard P.J."/>
            <person name="Howden P.J."/>
            <person name="Huckle E."/>
            <person name="Johnson C."/>
            <person name="Johnson D."/>
            <person name="Joy A.A."/>
            <person name="Kay M."/>
            <person name="Keenan S."/>
            <person name="Kershaw J.K."/>
            <person name="Kimberley A.M."/>
            <person name="King A."/>
            <person name="Knights A."/>
            <person name="Laird G.K."/>
            <person name="Langford C."/>
            <person name="Lawlor S."/>
            <person name="Leongamornlert D.A."/>
            <person name="Leversha M."/>
            <person name="Lloyd C."/>
            <person name="Lloyd D.M."/>
            <person name="Lovell J."/>
            <person name="Martin S."/>
            <person name="Mashreghi-Mohammadi M."/>
            <person name="Matthews L."/>
            <person name="McLaren S."/>
            <person name="McLay K.E."/>
            <person name="McMurray A."/>
            <person name="Milne S."/>
            <person name="Nickerson T."/>
            <person name="Nisbett J."/>
            <person name="Nordsiek G."/>
            <person name="Pearce A.V."/>
            <person name="Peck A.I."/>
            <person name="Porter K.M."/>
            <person name="Pandian R."/>
            <person name="Pelan S."/>
            <person name="Phillimore B."/>
            <person name="Povey S."/>
            <person name="Ramsey Y."/>
            <person name="Rand V."/>
            <person name="Scharfe M."/>
            <person name="Sehra H.K."/>
            <person name="Shownkeen R."/>
            <person name="Sims S.K."/>
            <person name="Skuce C.D."/>
            <person name="Smith M."/>
            <person name="Steward C.A."/>
            <person name="Swarbreck D."/>
            <person name="Sycamore N."/>
            <person name="Tester J."/>
            <person name="Thorpe A."/>
            <person name="Tracey A."/>
            <person name="Tromans A."/>
            <person name="Thomas D.W."/>
            <person name="Wall M."/>
            <person name="Wallis J.M."/>
            <person name="West A.P."/>
            <person name="Whitehead S.L."/>
            <person name="Willey D.L."/>
            <person name="Williams S.A."/>
            <person name="Wilming L."/>
            <person name="Wray P.W."/>
            <person name="Young L."/>
            <person name="Ashurst J.L."/>
            <person name="Coulson A."/>
            <person name="Blocker H."/>
            <person name="Durbin R.M."/>
            <person name="Sulston J.E."/>
            <person name="Hubbard T."/>
            <person name="Jackson M.J."/>
            <person name="Bentley D.R."/>
            <person name="Beck S."/>
            <person name="Rogers J."/>
            <person name="Dunham I."/>
        </authorList>
    </citation>
    <scope>NUCLEOTIDE SEQUENCE [LARGE SCALE GENOMIC DNA]</scope>
</reference>
<reference key="3">
    <citation type="submission" date="2005-09" db="EMBL/GenBank/DDBJ databases">
        <authorList>
            <person name="Mural R.J."/>
            <person name="Istrail S."/>
            <person name="Sutton G.G."/>
            <person name="Florea L."/>
            <person name="Halpern A.L."/>
            <person name="Mobarry C.M."/>
            <person name="Lippert R."/>
            <person name="Walenz B."/>
            <person name="Shatkay H."/>
            <person name="Dew I."/>
            <person name="Miller J.R."/>
            <person name="Flanigan M.J."/>
            <person name="Edwards N.J."/>
            <person name="Bolanos R."/>
            <person name="Fasulo D."/>
            <person name="Halldorsson B.V."/>
            <person name="Hannenhalli S."/>
            <person name="Turner R."/>
            <person name="Yooseph S."/>
            <person name="Lu F."/>
            <person name="Nusskern D.R."/>
            <person name="Shue B.C."/>
            <person name="Zheng X.H."/>
            <person name="Zhong F."/>
            <person name="Delcher A.L."/>
            <person name="Huson D.H."/>
            <person name="Kravitz S.A."/>
            <person name="Mouchard L."/>
            <person name="Reinert K."/>
            <person name="Remington K.A."/>
            <person name="Clark A.G."/>
            <person name="Waterman M.S."/>
            <person name="Eichler E.E."/>
            <person name="Adams M.D."/>
            <person name="Hunkapiller M.W."/>
            <person name="Myers E.W."/>
            <person name="Venter J.C."/>
        </authorList>
    </citation>
    <scope>NUCLEOTIDE SEQUENCE [LARGE SCALE GENOMIC DNA]</scope>
</reference>
<reference key="4">
    <citation type="journal article" date="1989" name="J. Interferon Res.">
        <title>Identification of a functional allele of a human interferon-alpha gene previously characterized as a pseudogene.</title>
        <authorList>
            <person name="Bartholomew C."/>
            <person name="Windass J.D."/>
        </authorList>
    </citation>
    <scope>NUCLEOTIDE SEQUENCE [MRNA]</scope>
</reference>
<reference key="5">
    <citation type="journal article" date="2004" name="Genome Res.">
        <title>The status, quality, and expansion of the NIH full-length cDNA project: the Mammalian Gene Collection (MGC).</title>
        <authorList>
            <consortium name="The MGC Project Team"/>
        </authorList>
    </citation>
    <scope>NUCLEOTIDE SEQUENCE [LARGE SCALE MRNA]</scope>
</reference>
<reference key="6">
    <citation type="journal article" date="1998" name="Biochem. J.">
        <title>Identification of nine interferon-alpha subtypes produced by Sendai virus-induced human peripheral blood leucocytes.</title>
        <authorList>
            <person name="Nyman T.A."/>
            <person name="Toeloe H."/>
            <person name="Parkkinen J."/>
            <person name="Kalkkinen N."/>
        </authorList>
    </citation>
    <scope>PROTEIN SEQUENCE OF 24-53</scope>
</reference>
<keyword id="KW-0051">Antiviral defense</keyword>
<keyword id="KW-0202">Cytokine</keyword>
<keyword id="KW-0903">Direct protein sequencing</keyword>
<keyword id="KW-1015">Disulfide bond</keyword>
<keyword id="KW-1267">Proteomics identification</keyword>
<keyword id="KW-1185">Reference proteome</keyword>
<keyword id="KW-0964">Secreted</keyword>
<keyword id="KW-0732">Signal</keyword>
<gene>
    <name type="primary">IFNA10</name>
</gene>
<organism>
    <name type="scientific">Homo sapiens</name>
    <name type="common">Human</name>
    <dbReference type="NCBI Taxonomy" id="9606"/>
    <lineage>
        <taxon>Eukaryota</taxon>
        <taxon>Metazoa</taxon>
        <taxon>Chordata</taxon>
        <taxon>Craniata</taxon>
        <taxon>Vertebrata</taxon>
        <taxon>Euteleostomi</taxon>
        <taxon>Mammalia</taxon>
        <taxon>Eutheria</taxon>
        <taxon>Euarchontoglires</taxon>
        <taxon>Primates</taxon>
        <taxon>Haplorrhini</taxon>
        <taxon>Catarrhini</taxon>
        <taxon>Hominidae</taxon>
        <taxon>Homo</taxon>
    </lineage>
</organism>
<proteinExistence type="evidence at protein level"/>
<name>IFN10_HUMAN</name>
<accession>P01566</accession>
<accession>Q5VV13</accession>
<feature type="signal peptide" evidence="2">
    <location>
        <begin position="1"/>
        <end position="23"/>
    </location>
</feature>
<feature type="chain" id="PRO_0000016366" description="Interferon alpha-10">
    <location>
        <begin position="24"/>
        <end position="189"/>
    </location>
</feature>
<feature type="disulfide bond" evidence="1">
    <location>
        <begin position="24"/>
        <end position="122"/>
    </location>
</feature>
<feature type="disulfide bond" evidence="1">
    <location>
        <begin position="52"/>
        <end position="162"/>
    </location>
</feature>
<feature type="sequence variant" id="VAR_029227" description="In dbSNP:rs2230853.">
    <original>G</original>
    <variation>A</variation>
    <location>
        <position position="42"/>
    </location>
</feature>
<protein>
    <recommendedName>
        <fullName>Interferon alpha-10</fullName>
        <shortName>IFN-alpha-10</shortName>
    </recommendedName>
    <alternativeName>
        <fullName>Interferon alpha-6L</fullName>
    </alternativeName>
    <alternativeName>
        <fullName>Interferon alpha-C</fullName>
        <shortName>LeIF C</shortName>
    </alternativeName>
</protein>
<dbReference type="EMBL" id="V00551">
    <property type="protein sequence ID" value="CAA23812.1"/>
    <property type="molecule type" value="mRNA"/>
</dbReference>
<dbReference type="EMBL" id="AL512606">
    <property type="status" value="NOT_ANNOTATED_CDS"/>
    <property type="molecule type" value="Genomic_DNA"/>
</dbReference>
<dbReference type="EMBL" id="CH471071">
    <property type="protein sequence ID" value="EAW58619.1"/>
    <property type="molecule type" value="Genomic_DNA"/>
</dbReference>
<dbReference type="EMBL" id="BC069409">
    <property type="protein sequence ID" value="AAH69409.1"/>
    <property type="molecule type" value="mRNA"/>
</dbReference>
<dbReference type="EMBL" id="BC103972">
    <property type="protein sequence ID" value="AAI03973.1"/>
    <property type="molecule type" value="mRNA"/>
</dbReference>
<dbReference type="EMBL" id="BC103973">
    <property type="protein sequence ID" value="AAI03974.1"/>
    <property type="molecule type" value="mRNA"/>
</dbReference>
<dbReference type="CCDS" id="CCDS6499.1"/>
<dbReference type="PIR" id="A60937">
    <property type="entry name" value="IVHUA5"/>
</dbReference>
<dbReference type="RefSeq" id="NP_002162.1">
    <property type="nucleotide sequence ID" value="NM_002171.2"/>
</dbReference>
<dbReference type="SMR" id="P01566"/>
<dbReference type="BioGRID" id="109669">
    <property type="interactions" value="6"/>
</dbReference>
<dbReference type="ComplexPortal" id="CPX-6002">
    <property type="entry name" value="Interferon alpha receptor-ligand complex, IFNA10 variant"/>
</dbReference>
<dbReference type="FunCoup" id="P01566">
    <property type="interactions" value="1092"/>
</dbReference>
<dbReference type="IntAct" id="P01566">
    <property type="interactions" value="7"/>
</dbReference>
<dbReference type="STRING" id="9606.ENSP00000369566"/>
<dbReference type="ChEMBL" id="CHEMBL3856161"/>
<dbReference type="BioMuta" id="IFNA10"/>
<dbReference type="DMDM" id="124453"/>
<dbReference type="MassIVE" id="P01566"/>
<dbReference type="PaxDb" id="9606-ENSP00000369566"/>
<dbReference type="PeptideAtlas" id="P01566"/>
<dbReference type="ABCD" id="P01566">
    <property type="antibodies" value="5 sequenced antibodies"/>
</dbReference>
<dbReference type="Antibodypedia" id="24857">
    <property type="antibodies" value="186 antibodies from 20 providers"/>
</dbReference>
<dbReference type="DNASU" id="3446"/>
<dbReference type="Ensembl" id="ENST00000357374.2">
    <property type="protein sequence ID" value="ENSP00000369566.1"/>
    <property type="gene ID" value="ENSG00000186803.3"/>
</dbReference>
<dbReference type="GeneID" id="3446"/>
<dbReference type="KEGG" id="hsa:3446"/>
<dbReference type="MANE-Select" id="ENST00000357374.2">
    <property type="protein sequence ID" value="ENSP00000369566.1"/>
    <property type="RefSeq nucleotide sequence ID" value="NM_002171.2"/>
    <property type="RefSeq protein sequence ID" value="NP_002162.1"/>
</dbReference>
<dbReference type="UCSC" id="uc003zoq.1">
    <property type="organism name" value="human"/>
</dbReference>
<dbReference type="AGR" id="HGNC:5418"/>
<dbReference type="CTD" id="3446"/>
<dbReference type="DisGeNET" id="3446"/>
<dbReference type="GeneCards" id="IFNA10"/>
<dbReference type="HGNC" id="HGNC:5418">
    <property type="gene designation" value="IFNA10"/>
</dbReference>
<dbReference type="HPA" id="ENSG00000186803">
    <property type="expression patterns" value="Not detected"/>
</dbReference>
<dbReference type="MIM" id="147577">
    <property type="type" value="gene"/>
</dbReference>
<dbReference type="neXtProt" id="NX_P01566"/>
<dbReference type="OpenTargets" id="ENSG00000186803"/>
<dbReference type="PharmGKB" id="PA29657"/>
<dbReference type="VEuPathDB" id="HostDB:ENSG00000186803"/>
<dbReference type="eggNOG" id="ENOG502SQAC">
    <property type="taxonomic scope" value="Eukaryota"/>
</dbReference>
<dbReference type="GeneTree" id="ENSGT01000000214430"/>
<dbReference type="HOGENOM" id="CLU_109427_0_0_1"/>
<dbReference type="InParanoid" id="P01566"/>
<dbReference type="OMA" id="RKYSPCA"/>
<dbReference type="OrthoDB" id="9526363at2759"/>
<dbReference type="PAN-GO" id="P01566">
    <property type="GO annotations" value="12 GO annotations based on evolutionary models"/>
</dbReference>
<dbReference type="PhylomeDB" id="P01566"/>
<dbReference type="TreeFam" id="TF336177"/>
<dbReference type="PathwayCommons" id="P01566"/>
<dbReference type="Reactome" id="R-HSA-909733">
    <property type="pathway name" value="Interferon alpha/beta signaling"/>
</dbReference>
<dbReference type="Reactome" id="R-HSA-912694">
    <property type="pathway name" value="Regulation of IFNA/IFNB signaling"/>
</dbReference>
<dbReference type="Reactome" id="R-HSA-933541">
    <property type="pathway name" value="TRAF6 mediated IRF7 activation"/>
</dbReference>
<dbReference type="Reactome" id="R-HSA-9705671">
    <property type="pathway name" value="SARS-CoV-2 activates/modulates innate and adaptive immune responses"/>
</dbReference>
<dbReference type="Reactome" id="R-HSA-983231">
    <property type="pathway name" value="Factors involved in megakaryocyte development and platelet production"/>
</dbReference>
<dbReference type="Reactome" id="R-HSA-9833109">
    <property type="pathway name" value="Evasion by RSV of host interferon responses"/>
</dbReference>
<dbReference type="SignaLink" id="P01566"/>
<dbReference type="SIGNOR" id="P01566"/>
<dbReference type="BioGRID-ORCS" id="3446">
    <property type="hits" value="10 hits in 1031 CRISPR screens"/>
</dbReference>
<dbReference type="GeneWiki" id="IFNA10"/>
<dbReference type="GenomeRNAi" id="3446"/>
<dbReference type="Pharos" id="P01566">
    <property type="development level" value="Tbio"/>
</dbReference>
<dbReference type="PRO" id="PR:P01566"/>
<dbReference type="Proteomes" id="UP000005640">
    <property type="component" value="Chromosome 9"/>
</dbReference>
<dbReference type="RNAct" id="P01566">
    <property type="molecule type" value="protein"/>
</dbReference>
<dbReference type="GO" id="GO:0005576">
    <property type="term" value="C:extracellular region"/>
    <property type="evidence" value="ECO:0000304"/>
    <property type="project" value="Reactome"/>
</dbReference>
<dbReference type="GO" id="GO:0005615">
    <property type="term" value="C:extracellular space"/>
    <property type="evidence" value="ECO:0000318"/>
    <property type="project" value="GO_Central"/>
</dbReference>
<dbReference type="GO" id="GO:0005125">
    <property type="term" value="F:cytokine activity"/>
    <property type="evidence" value="ECO:0000318"/>
    <property type="project" value="GO_Central"/>
</dbReference>
<dbReference type="GO" id="GO:0005132">
    <property type="term" value="F:type I interferon receptor binding"/>
    <property type="evidence" value="ECO:0000318"/>
    <property type="project" value="GO_Central"/>
</dbReference>
<dbReference type="GO" id="GO:0002250">
    <property type="term" value="P:adaptive immune response"/>
    <property type="evidence" value="ECO:0000318"/>
    <property type="project" value="GO_Central"/>
</dbReference>
<dbReference type="GO" id="GO:0002312">
    <property type="term" value="P:B cell activation involved in immune response"/>
    <property type="evidence" value="ECO:0000318"/>
    <property type="project" value="GO_Central"/>
</dbReference>
<dbReference type="GO" id="GO:0098586">
    <property type="term" value="P:cellular response to virus"/>
    <property type="evidence" value="ECO:0000303"/>
    <property type="project" value="ComplexPortal"/>
</dbReference>
<dbReference type="GO" id="GO:0051607">
    <property type="term" value="P:defense response to virus"/>
    <property type="evidence" value="ECO:0007669"/>
    <property type="project" value="UniProtKB-KW"/>
</dbReference>
<dbReference type="GO" id="GO:0006959">
    <property type="term" value="P:humoral immune response"/>
    <property type="evidence" value="ECO:0000318"/>
    <property type="project" value="GO_Central"/>
</dbReference>
<dbReference type="GO" id="GO:0002323">
    <property type="term" value="P:natural killer cell activation involved in immune response"/>
    <property type="evidence" value="ECO:0000318"/>
    <property type="project" value="GO_Central"/>
</dbReference>
<dbReference type="GO" id="GO:0043330">
    <property type="term" value="P:response to exogenous dsRNA"/>
    <property type="evidence" value="ECO:0000318"/>
    <property type="project" value="GO_Central"/>
</dbReference>
<dbReference type="GO" id="GO:0002286">
    <property type="term" value="P:T cell activation involved in immune response"/>
    <property type="evidence" value="ECO:0000318"/>
    <property type="project" value="GO_Central"/>
</dbReference>
<dbReference type="GO" id="GO:0060337">
    <property type="term" value="P:type I interferon-mediated signaling pathway"/>
    <property type="evidence" value="ECO:0000318"/>
    <property type="project" value="GO_Central"/>
</dbReference>
<dbReference type="CDD" id="cd00095">
    <property type="entry name" value="IFab"/>
    <property type="match status" value="1"/>
</dbReference>
<dbReference type="FunFam" id="1.20.1250.10:FF:000001">
    <property type="entry name" value="Interferon alpha"/>
    <property type="match status" value="1"/>
</dbReference>
<dbReference type="Gene3D" id="1.20.1250.10">
    <property type="match status" value="1"/>
</dbReference>
<dbReference type="InterPro" id="IPR009079">
    <property type="entry name" value="4_helix_cytokine-like_core"/>
</dbReference>
<dbReference type="InterPro" id="IPR000471">
    <property type="entry name" value="Interferon_alpha/beta/delta"/>
</dbReference>
<dbReference type="PANTHER" id="PTHR11691:SF66">
    <property type="entry name" value="INTERFERON ALPHA-10-RELATED"/>
    <property type="match status" value="1"/>
</dbReference>
<dbReference type="PANTHER" id="PTHR11691">
    <property type="entry name" value="TYPE I INTERFERON"/>
    <property type="match status" value="1"/>
</dbReference>
<dbReference type="Pfam" id="PF00143">
    <property type="entry name" value="Interferon"/>
    <property type="match status" value="1"/>
</dbReference>
<dbReference type="PRINTS" id="PR00266">
    <property type="entry name" value="INTERFERONAB"/>
</dbReference>
<dbReference type="SMART" id="SM00076">
    <property type="entry name" value="IFabd"/>
    <property type="match status" value="1"/>
</dbReference>
<dbReference type="SUPFAM" id="SSF47266">
    <property type="entry name" value="4-helical cytokines"/>
    <property type="match status" value="1"/>
</dbReference>
<dbReference type="PROSITE" id="PS00252">
    <property type="entry name" value="INTERFERON_A_B_D"/>
    <property type="match status" value="1"/>
</dbReference>